<protein>
    <recommendedName>
        <fullName evidence="1">Small ribosomal subunit protein uS5</fullName>
    </recommendedName>
    <alternativeName>
        <fullName evidence="3">30S ribosomal protein S5</fullName>
    </alternativeName>
</protein>
<organism>
    <name type="scientific">Bifidobacterium longum (strain NCC 2705)</name>
    <dbReference type="NCBI Taxonomy" id="206672"/>
    <lineage>
        <taxon>Bacteria</taxon>
        <taxon>Bacillati</taxon>
        <taxon>Actinomycetota</taxon>
        <taxon>Actinomycetes</taxon>
        <taxon>Bifidobacteriales</taxon>
        <taxon>Bifidobacteriaceae</taxon>
        <taxon>Bifidobacterium</taxon>
    </lineage>
</organism>
<comment type="function">
    <text evidence="1">With S4 and S12 plays an important role in translational accuracy.</text>
</comment>
<comment type="function">
    <text evidence="1">Located at the back of the 30S subunit body where it stabilizes the conformation of the head with respect to the body.</text>
</comment>
<comment type="subunit">
    <text evidence="1">Part of the 30S ribosomal subunit. Contacts proteins S4 and S8.</text>
</comment>
<comment type="domain">
    <text>The N-terminal domain interacts with the head of the 30S subunit; the C-terminal domain interacts with the body and contacts protein S4. The interaction surface between S4 and S5 is involved in control of translational fidelity.</text>
</comment>
<comment type="similarity">
    <text evidence="1">Belongs to the universal ribosomal protein uS5 family.</text>
</comment>
<evidence type="ECO:0000255" key="1">
    <source>
        <dbReference type="HAMAP-Rule" id="MF_01307"/>
    </source>
</evidence>
<evidence type="ECO:0000256" key="2">
    <source>
        <dbReference type="SAM" id="MobiDB-lite"/>
    </source>
</evidence>
<evidence type="ECO:0000305" key="3"/>
<name>RS5_BIFLO</name>
<gene>
    <name evidence="1" type="primary">rpsE</name>
    <name type="ordered locus">BL1597</name>
</gene>
<proteinExistence type="inferred from homology"/>
<accession>P59122</accession>
<reference key="1">
    <citation type="journal article" date="2002" name="Proc. Natl. Acad. Sci. U.S.A.">
        <title>The genome sequence of Bifidobacterium longum reflects its adaptation to the human gastrointestinal tract.</title>
        <authorList>
            <person name="Schell M.A."/>
            <person name="Karmirantzou M."/>
            <person name="Snel B."/>
            <person name="Vilanova D."/>
            <person name="Berger B."/>
            <person name="Pessi G."/>
            <person name="Zwahlen M.-C."/>
            <person name="Desiere F."/>
            <person name="Bork P."/>
            <person name="Delley M."/>
            <person name="Pridmore R.D."/>
            <person name="Arigoni F."/>
        </authorList>
    </citation>
    <scope>NUCLEOTIDE SEQUENCE [LARGE SCALE GENOMIC DNA]</scope>
    <source>
        <strain>NCC 2705</strain>
    </source>
</reference>
<sequence>MAEETQNTVATESNNEDRKGRRGQRGEGRRGERRNRREENHGDELLDRVVTINRVSKTHKGGRTFSFAALVVVGDGNGTVGVGYGKSREVPAAIAKGQLDAKKHMFSVPRVRGTITHPVQGHDAAGTVLLRPAAPGTGVIAGGSVRAVMECAGITDVLTKSMGSATAVNVVRATVDALKQLEEPEEIAARRGLALDEVAPDALLRARAAGIAEARKAREEAAAAKAAEEKDGE</sequence>
<keyword id="KW-1185">Reference proteome</keyword>
<keyword id="KW-0687">Ribonucleoprotein</keyword>
<keyword id="KW-0689">Ribosomal protein</keyword>
<keyword id="KW-0694">RNA-binding</keyword>
<keyword id="KW-0699">rRNA-binding</keyword>
<dbReference type="EMBL" id="AE014295">
    <property type="protein sequence ID" value="AAN25386.1"/>
    <property type="molecule type" value="Genomic_DNA"/>
</dbReference>
<dbReference type="RefSeq" id="NP_696750.1">
    <property type="nucleotide sequence ID" value="NC_004307.2"/>
</dbReference>
<dbReference type="SMR" id="P59122"/>
<dbReference type="STRING" id="206672.BL1597"/>
<dbReference type="EnsemblBacteria" id="AAN25386">
    <property type="protein sequence ID" value="AAN25386"/>
    <property type="gene ID" value="BL1597"/>
</dbReference>
<dbReference type="KEGG" id="blo:BL1597"/>
<dbReference type="PATRIC" id="fig|206672.9.peg.1652"/>
<dbReference type="HOGENOM" id="CLU_065898_1_1_11"/>
<dbReference type="OrthoDB" id="9809045at2"/>
<dbReference type="PhylomeDB" id="P59122"/>
<dbReference type="Proteomes" id="UP000000439">
    <property type="component" value="Chromosome"/>
</dbReference>
<dbReference type="GO" id="GO:0015935">
    <property type="term" value="C:small ribosomal subunit"/>
    <property type="evidence" value="ECO:0007669"/>
    <property type="project" value="InterPro"/>
</dbReference>
<dbReference type="GO" id="GO:0019843">
    <property type="term" value="F:rRNA binding"/>
    <property type="evidence" value="ECO:0007669"/>
    <property type="project" value="UniProtKB-UniRule"/>
</dbReference>
<dbReference type="GO" id="GO:0003735">
    <property type="term" value="F:structural constituent of ribosome"/>
    <property type="evidence" value="ECO:0007669"/>
    <property type="project" value="InterPro"/>
</dbReference>
<dbReference type="GO" id="GO:0006412">
    <property type="term" value="P:translation"/>
    <property type="evidence" value="ECO:0007669"/>
    <property type="project" value="UniProtKB-UniRule"/>
</dbReference>
<dbReference type="FunFam" id="3.30.160.20:FF:000001">
    <property type="entry name" value="30S ribosomal protein S5"/>
    <property type="match status" value="1"/>
</dbReference>
<dbReference type="FunFam" id="3.30.230.10:FF:000002">
    <property type="entry name" value="30S ribosomal protein S5"/>
    <property type="match status" value="1"/>
</dbReference>
<dbReference type="Gene3D" id="3.30.160.20">
    <property type="match status" value="1"/>
</dbReference>
<dbReference type="Gene3D" id="3.30.230.10">
    <property type="match status" value="1"/>
</dbReference>
<dbReference type="HAMAP" id="MF_01307_B">
    <property type="entry name" value="Ribosomal_uS5_B"/>
    <property type="match status" value="1"/>
</dbReference>
<dbReference type="InterPro" id="IPR020568">
    <property type="entry name" value="Ribosomal_Su5_D2-typ_SF"/>
</dbReference>
<dbReference type="InterPro" id="IPR000851">
    <property type="entry name" value="Ribosomal_uS5"/>
</dbReference>
<dbReference type="InterPro" id="IPR005712">
    <property type="entry name" value="Ribosomal_uS5_bac-type"/>
</dbReference>
<dbReference type="InterPro" id="IPR005324">
    <property type="entry name" value="Ribosomal_uS5_C"/>
</dbReference>
<dbReference type="InterPro" id="IPR013810">
    <property type="entry name" value="Ribosomal_uS5_N"/>
</dbReference>
<dbReference type="InterPro" id="IPR018192">
    <property type="entry name" value="Ribosomal_uS5_N_CS"/>
</dbReference>
<dbReference type="InterPro" id="IPR014721">
    <property type="entry name" value="Ribsml_uS5_D2-typ_fold_subgr"/>
</dbReference>
<dbReference type="NCBIfam" id="TIGR01021">
    <property type="entry name" value="rpsE_bact"/>
    <property type="match status" value="1"/>
</dbReference>
<dbReference type="PANTHER" id="PTHR48277">
    <property type="entry name" value="MITOCHONDRIAL RIBOSOMAL PROTEIN S5"/>
    <property type="match status" value="1"/>
</dbReference>
<dbReference type="PANTHER" id="PTHR48277:SF1">
    <property type="entry name" value="MITOCHONDRIAL RIBOSOMAL PROTEIN S5"/>
    <property type="match status" value="1"/>
</dbReference>
<dbReference type="Pfam" id="PF00333">
    <property type="entry name" value="Ribosomal_S5"/>
    <property type="match status" value="1"/>
</dbReference>
<dbReference type="Pfam" id="PF03719">
    <property type="entry name" value="Ribosomal_S5_C"/>
    <property type="match status" value="1"/>
</dbReference>
<dbReference type="SUPFAM" id="SSF54768">
    <property type="entry name" value="dsRNA-binding domain-like"/>
    <property type="match status" value="1"/>
</dbReference>
<dbReference type="SUPFAM" id="SSF54211">
    <property type="entry name" value="Ribosomal protein S5 domain 2-like"/>
    <property type="match status" value="1"/>
</dbReference>
<dbReference type="PROSITE" id="PS00585">
    <property type="entry name" value="RIBOSOMAL_S5"/>
    <property type="match status" value="1"/>
</dbReference>
<dbReference type="PROSITE" id="PS50881">
    <property type="entry name" value="S5_DSRBD"/>
    <property type="match status" value="1"/>
</dbReference>
<feature type="chain" id="PRO_0000131475" description="Small ribosomal subunit protein uS5">
    <location>
        <begin position="1"/>
        <end position="233"/>
    </location>
</feature>
<feature type="domain" description="S5 DRBM" evidence="1">
    <location>
        <begin position="45"/>
        <end position="108"/>
    </location>
</feature>
<feature type="region of interest" description="Disordered" evidence="2">
    <location>
        <begin position="1"/>
        <end position="40"/>
    </location>
</feature>
<feature type="compositionally biased region" description="Polar residues" evidence="2">
    <location>
        <begin position="1"/>
        <end position="13"/>
    </location>
</feature>
<feature type="compositionally biased region" description="Basic and acidic residues" evidence="2">
    <location>
        <begin position="15"/>
        <end position="40"/>
    </location>
</feature>